<feature type="chain" id="PRO_0000388200" description="ATPase GET3">
    <location>
        <begin position="1"/>
        <end position="340"/>
    </location>
</feature>
<feature type="active site" evidence="1">
    <location>
        <position position="64"/>
    </location>
</feature>
<feature type="binding site" evidence="1">
    <location>
        <begin position="35"/>
        <end position="42"/>
    </location>
    <ligand>
        <name>ATP</name>
        <dbReference type="ChEBI" id="CHEBI:30616"/>
    </ligand>
</feature>
<feature type="binding site" evidence="1">
    <location>
        <position position="245"/>
    </location>
    <ligand>
        <name>ATP</name>
        <dbReference type="ChEBI" id="CHEBI:30616"/>
    </ligand>
</feature>
<feature type="binding site" evidence="1">
    <location>
        <position position="272"/>
    </location>
    <ligand>
        <name>ATP</name>
        <dbReference type="ChEBI" id="CHEBI:30616"/>
    </ligand>
</feature>
<feature type="binding site" evidence="1">
    <location>
        <position position="283"/>
    </location>
    <ligand>
        <name>Zn(2+)</name>
        <dbReference type="ChEBI" id="CHEBI:29105"/>
        <note>ligand shared between dimeric partners</note>
    </ligand>
</feature>
<feature type="binding site" evidence="1">
    <location>
        <position position="286"/>
    </location>
    <ligand>
        <name>Zn(2+)</name>
        <dbReference type="ChEBI" id="CHEBI:29105"/>
        <note>ligand shared between dimeric partners</note>
    </ligand>
</feature>
<dbReference type="EC" id="3.6.-.-" evidence="1"/>
<dbReference type="EMBL" id="CH408033">
    <property type="protein sequence ID" value="EAQ85940.1"/>
    <property type="molecule type" value="Genomic_DNA"/>
</dbReference>
<dbReference type="RefSeq" id="XP_001224849.1">
    <property type="nucleotide sequence ID" value="XM_001224848.1"/>
</dbReference>
<dbReference type="SMR" id="Q2GXW1"/>
<dbReference type="FunCoup" id="Q2GXW1">
    <property type="interactions" value="877"/>
</dbReference>
<dbReference type="STRING" id="306901.Q2GXW1"/>
<dbReference type="GeneID" id="4394544"/>
<dbReference type="VEuPathDB" id="FungiDB:CHGG_07193"/>
<dbReference type="eggNOG" id="KOG2825">
    <property type="taxonomic scope" value="Eukaryota"/>
</dbReference>
<dbReference type="HOGENOM" id="CLU_040761_0_0_1"/>
<dbReference type="InParanoid" id="Q2GXW1"/>
<dbReference type="OMA" id="MDAPYEF"/>
<dbReference type="OrthoDB" id="1770at2759"/>
<dbReference type="Proteomes" id="UP000001056">
    <property type="component" value="Unassembled WGS sequence"/>
</dbReference>
<dbReference type="GO" id="GO:0043529">
    <property type="term" value="C:GET complex"/>
    <property type="evidence" value="ECO:0007669"/>
    <property type="project" value="TreeGrafter"/>
</dbReference>
<dbReference type="GO" id="GO:0005524">
    <property type="term" value="F:ATP binding"/>
    <property type="evidence" value="ECO:0007669"/>
    <property type="project" value="UniProtKB-UniRule"/>
</dbReference>
<dbReference type="GO" id="GO:0016887">
    <property type="term" value="F:ATP hydrolysis activity"/>
    <property type="evidence" value="ECO:0007669"/>
    <property type="project" value="InterPro"/>
</dbReference>
<dbReference type="GO" id="GO:0046872">
    <property type="term" value="F:metal ion binding"/>
    <property type="evidence" value="ECO:0007669"/>
    <property type="project" value="UniProtKB-KW"/>
</dbReference>
<dbReference type="GO" id="GO:0071816">
    <property type="term" value="P:tail-anchored membrane protein insertion into ER membrane"/>
    <property type="evidence" value="ECO:0007669"/>
    <property type="project" value="TreeGrafter"/>
</dbReference>
<dbReference type="CDD" id="cd02035">
    <property type="entry name" value="ArsA"/>
    <property type="match status" value="1"/>
</dbReference>
<dbReference type="FunFam" id="3.40.50.300:FF:000235">
    <property type="entry name" value="ATPase ASNA1"/>
    <property type="match status" value="1"/>
</dbReference>
<dbReference type="Gene3D" id="3.40.50.300">
    <property type="entry name" value="P-loop containing nucleotide triphosphate hydrolases"/>
    <property type="match status" value="1"/>
</dbReference>
<dbReference type="HAMAP" id="MF_03112">
    <property type="entry name" value="Asna1_Get3"/>
    <property type="match status" value="1"/>
</dbReference>
<dbReference type="InterPro" id="IPR025723">
    <property type="entry name" value="Anion-transp_ATPase-like_dom"/>
</dbReference>
<dbReference type="InterPro" id="IPR016300">
    <property type="entry name" value="ATPase_ArsA/GET3"/>
</dbReference>
<dbReference type="InterPro" id="IPR027542">
    <property type="entry name" value="ATPase_ArsA/GET3_euk"/>
</dbReference>
<dbReference type="InterPro" id="IPR027417">
    <property type="entry name" value="P-loop_NTPase"/>
</dbReference>
<dbReference type="NCBIfam" id="TIGR00345">
    <property type="entry name" value="GET3_arsA_TRC40"/>
    <property type="match status" value="1"/>
</dbReference>
<dbReference type="PANTHER" id="PTHR10803">
    <property type="entry name" value="ARSENICAL PUMP-DRIVING ATPASE ARSENITE-TRANSLOCATING ATPASE"/>
    <property type="match status" value="1"/>
</dbReference>
<dbReference type="PANTHER" id="PTHR10803:SF3">
    <property type="entry name" value="ATPASE GET3"/>
    <property type="match status" value="1"/>
</dbReference>
<dbReference type="Pfam" id="PF02374">
    <property type="entry name" value="ArsA_ATPase"/>
    <property type="match status" value="1"/>
</dbReference>
<dbReference type="SUPFAM" id="SSF52540">
    <property type="entry name" value="P-loop containing nucleoside triphosphate hydrolases"/>
    <property type="match status" value="1"/>
</dbReference>
<reference key="1">
    <citation type="journal article" date="2015" name="Genome Announc.">
        <title>Draft genome sequence of the cellulolytic fungus Chaetomium globosum.</title>
        <authorList>
            <person name="Cuomo C.A."/>
            <person name="Untereiner W.A."/>
            <person name="Ma L.-J."/>
            <person name="Grabherr M."/>
            <person name="Birren B.W."/>
        </authorList>
    </citation>
    <scope>NUCLEOTIDE SEQUENCE [LARGE SCALE GENOMIC DNA]</scope>
    <source>
        <strain>ATCC 6205 / CBS 148.51 / DSM 1962 / NBRC 6347 / NRRL 1970</strain>
    </source>
</reference>
<proteinExistence type="inferred from homology"/>
<accession>Q2GXW1</accession>
<protein>
    <recommendedName>
        <fullName evidence="1">ATPase GET3</fullName>
        <ecNumber evidence="1">3.6.-.-</ecNumber>
    </recommendedName>
    <alternativeName>
        <fullName evidence="1">Arsenical pump-driving ATPase</fullName>
    </alternativeName>
    <alternativeName>
        <fullName evidence="1">Arsenite-stimulated ATPase</fullName>
    </alternativeName>
    <alternativeName>
        <fullName evidence="1">Golgi to ER traffic protein 3</fullName>
    </alternativeName>
    <alternativeName>
        <fullName evidence="1">Guided entry of tail-anchored proteins 3</fullName>
    </alternativeName>
</protein>
<evidence type="ECO:0000255" key="1">
    <source>
        <dbReference type="HAMAP-Rule" id="MF_03112"/>
    </source>
</evidence>
<keyword id="KW-0067">ATP-binding</keyword>
<keyword id="KW-0963">Cytoplasm</keyword>
<keyword id="KW-0256">Endoplasmic reticulum</keyword>
<keyword id="KW-0378">Hydrolase</keyword>
<keyword id="KW-0479">Metal-binding</keyword>
<keyword id="KW-0547">Nucleotide-binding</keyword>
<keyword id="KW-1185">Reference proteome</keyword>
<keyword id="KW-0813">Transport</keyword>
<keyword id="KW-0862">Zinc</keyword>
<name>GET3_CHAGB</name>
<sequence length="340" mass="37554">MSATLINVDDGDAMEPTLQSILDQRSLRWIFVGGKGGVGKTTTSCSLAIQLAKVRRSVLLISTDPAHNLSDAFSQKFGKEARLIDGFENLSAMEIDPNGSIQDLLAGQGEGDAGADMGGMGGMMQDLAFAIPGIDEAMSFAEVLKQVKSLSYETIIFDTAPTGHTLRFLQFPSVLEKALAKVSQLSNQYGPLLNGFLGSNGTLPNGQNLNEMMEKLETLRATISEVNTQFKDERLTTFVCVCIPEFLSLYETERMIQELASYGIDTHSIVVNQLLFPKPGSDCEQCTARRRMQKKYLEQIEELYDEFNVVKMPLLVEEVRGKERLERFSEMLVTPFVPPS</sequence>
<organism>
    <name type="scientific">Chaetomium globosum (strain ATCC 6205 / CBS 148.51 / DSM 1962 / NBRC 6347 / NRRL 1970)</name>
    <name type="common">Soil fungus</name>
    <dbReference type="NCBI Taxonomy" id="306901"/>
    <lineage>
        <taxon>Eukaryota</taxon>
        <taxon>Fungi</taxon>
        <taxon>Dikarya</taxon>
        <taxon>Ascomycota</taxon>
        <taxon>Pezizomycotina</taxon>
        <taxon>Sordariomycetes</taxon>
        <taxon>Sordariomycetidae</taxon>
        <taxon>Sordariales</taxon>
        <taxon>Chaetomiaceae</taxon>
        <taxon>Chaetomium</taxon>
    </lineage>
</organism>
<gene>
    <name evidence="1" type="primary">GET3</name>
    <name type="ORF">CHGG_07193</name>
</gene>
<comment type="function">
    <text evidence="1">ATPase required for the post-translational delivery of tail-anchored (TA) proteins to the endoplasmic reticulum. Recognizes and selectively binds the transmembrane domain of TA proteins in the cytosol. This complex then targets to the endoplasmic reticulum by membrane-bound receptors, where the tail-anchored protein is released for insertion. This process is regulated by ATP binding and hydrolysis. ATP binding drives the homodimer towards the closed dimer state, facilitating recognition of newly synthesized TA membrane proteins. ATP hydrolysis is required for insertion. Subsequently, the homodimer reverts towards the open dimer state, lowering its affinity for the membrane-bound receptor, and returning it to the cytosol to initiate a new round of targeting.</text>
</comment>
<comment type="subunit">
    <text evidence="1">Homodimer.</text>
</comment>
<comment type="subcellular location">
    <subcellularLocation>
        <location evidence="1">Cytoplasm</location>
    </subcellularLocation>
    <subcellularLocation>
        <location evidence="1">Endoplasmic reticulum</location>
    </subcellularLocation>
</comment>
<comment type="similarity">
    <text evidence="1">Belongs to the arsA ATPase family.</text>
</comment>